<organism>
    <name type="scientific">Candida albicans (strain SC5314 / ATCC MYA-2876)</name>
    <name type="common">Yeast</name>
    <dbReference type="NCBI Taxonomy" id="237561"/>
    <lineage>
        <taxon>Eukaryota</taxon>
        <taxon>Fungi</taxon>
        <taxon>Dikarya</taxon>
        <taxon>Ascomycota</taxon>
        <taxon>Saccharomycotina</taxon>
        <taxon>Pichiomycetes</taxon>
        <taxon>Debaryomycetaceae</taxon>
        <taxon>Candida/Lodderomyces clade</taxon>
        <taxon>Candida</taxon>
    </lineage>
</organism>
<dbReference type="EC" id="1.1.1.283" evidence="2"/>
<dbReference type="EMBL" id="CP017627">
    <property type="protein sequence ID" value="AOW29710.1"/>
    <property type="molecule type" value="Genomic_DNA"/>
</dbReference>
<dbReference type="RefSeq" id="XP_720616.1">
    <property type="nucleotide sequence ID" value="XM_715523.2"/>
</dbReference>
<dbReference type="SMR" id="P83775"/>
<dbReference type="STRING" id="237561.P83775"/>
<dbReference type="EnsemblFungi" id="C5_02860C_A-T">
    <property type="protein sequence ID" value="C5_02860C_A-T-p1"/>
    <property type="gene ID" value="C5_02860C_A"/>
</dbReference>
<dbReference type="GeneID" id="3637744"/>
<dbReference type="KEGG" id="cal:CAALFM_C502860CA"/>
<dbReference type="CGD" id="CAL0000189861">
    <property type="gene designation" value="GRP2"/>
</dbReference>
<dbReference type="VEuPathDB" id="FungiDB:C5_02860C_A"/>
<dbReference type="eggNOG" id="KOG1502">
    <property type="taxonomic scope" value="Eukaryota"/>
</dbReference>
<dbReference type="HOGENOM" id="CLU_007383_9_2_1"/>
<dbReference type="InParanoid" id="P83775"/>
<dbReference type="OMA" id="AWYAMSK"/>
<dbReference type="OrthoDB" id="2735536at2759"/>
<dbReference type="PRO" id="PR:P83775"/>
<dbReference type="Proteomes" id="UP000000559">
    <property type="component" value="Chromosome 5"/>
</dbReference>
<dbReference type="GO" id="GO:0005737">
    <property type="term" value="C:cytoplasm"/>
    <property type="evidence" value="ECO:0007669"/>
    <property type="project" value="UniProtKB-SubCell"/>
</dbReference>
<dbReference type="GO" id="GO:0005576">
    <property type="term" value="C:extracellular region"/>
    <property type="evidence" value="ECO:0000314"/>
    <property type="project" value="CGD"/>
</dbReference>
<dbReference type="GO" id="GO:0062040">
    <property type="term" value="C:fungal biofilm matrix"/>
    <property type="evidence" value="ECO:0000314"/>
    <property type="project" value="CGD"/>
</dbReference>
<dbReference type="GO" id="GO:0043892">
    <property type="term" value="F:methylglyoxal reductase (NADPH) activity"/>
    <property type="evidence" value="ECO:0007669"/>
    <property type="project" value="UniProtKB-EC"/>
</dbReference>
<dbReference type="GO" id="GO:0016616">
    <property type="term" value="F:oxidoreductase activity, acting on the CH-OH group of donors, NAD or NADP as acceptor"/>
    <property type="evidence" value="ECO:0000314"/>
    <property type="project" value="CGD"/>
</dbReference>
<dbReference type="GO" id="GO:0019244">
    <property type="term" value="P:lactate biosynthetic process from pyruvate"/>
    <property type="evidence" value="ECO:0000314"/>
    <property type="project" value="CGD"/>
</dbReference>
<dbReference type="GO" id="GO:0009438">
    <property type="term" value="P:methylglyoxal metabolic process"/>
    <property type="evidence" value="ECO:0000314"/>
    <property type="project" value="CGD"/>
</dbReference>
<dbReference type="CDD" id="cd05227">
    <property type="entry name" value="AR_SDR_e"/>
    <property type="match status" value="1"/>
</dbReference>
<dbReference type="FunFam" id="3.40.50.720:FF:000191">
    <property type="entry name" value="Methylglyoxal reductase (NADPH-dependent)"/>
    <property type="match status" value="1"/>
</dbReference>
<dbReference type="Gene3D" id="3.40.50.720">
    <property type="entry name" value="NAD(P)-binding Rossmann-like Domain"/>
    <property type="match status" value="1"/>
</dbReference>
<dbReference type="InterPro" id="IPR001509">
    <property type="entry name" value="Epimerase_deHydtase"/>
</dbReference>
<dbReference type="InterPro" id="IPR036291">
    <property type="entry name" value="NAD(P)-bd_dom_sf"/>
</dbReference>
<dbReference type="InterPro" id="IPR050425">
    <property type="entry name" value="NAD(P)_dehydrat-like"/>
</dbReference>
<dbReference type="PANTHER" id="PTHR10366">
    <property type="entry name" value="NAD DEPENDENT EPIMERASE/DEHYDRATASE"/>
    <property type="match status" value="1"/>
</dbReference>
<dbReference type="PANTHER" id="PTHR10366:SF564">
    <property type="entry name" value="STEROL-4-ALPHA-CARBOXYLATE 3-DEHYDROGENASE, DECARBOXYLATING"/>
    <property type="match status" value="1"/>
</dbReference>
<dbReference type="Pfam" id="PF01370">
    <property type="entry name" value="Epimerase"/>
    <property type="match status" value="1"/>
</dbReference>
<dbReference type="SUPFAM" id="SSF51735">
    <property type="entry name" value="NAD(P)-binding Rossmann-fold domains"/>
    <property type="match status" value="1"/>
</dbReference>
<reference key="1">
    <citation type="journal article" date="2004" name="Proc. Natl. Acad. Sci. U.S.A.">
        <title>The diploid genome sequence of Candida albicans.</title>
        <authorList>
            <person name="Jones T."/>
            <person name="Federspiel N.A."/>
            <person name="Chibana H."/>
            <person name="Dungan J."/>
            <person name="Kalman S."/>
            <person name="Magee B.B."/>
            <person name="Newport G."/>
            <person name="Thorstenson Y.R."/>
            <person name="Agabian N."/>
            <person name="Magee P.T."/>
            <person name="Davis R.W."/>
            <person name="Scherer S."/>
        </authorList>
    </citation>
    <scope>NUCLEOTIDE SEQUENCE [LARGE SCALE GENOMIC DNA]</scope>
    <source>
        <strain>SC5314 / ATCC MYA-2876</strain>
    </source>
</reference>
<reference key="2">
    <citation type="journal article" date="2007" name="Genome Biol.">
        <title>Assembly of the Candida albicans genome into sixteen supercontigs aligned on the eight chromosomes.</title>
        <authorList>
            <person name="van het Hoog M."/>
            <person name="Rast T.J."/>
            <person name="Martchenko M."/>
            <person name="Grindle S."/>
            <person name="Dignard D."/>
            <person name="Hogues H."/>
            <person name="Cuomo C."/>
            <person name="Berriman M."/>
            <person name="Scherer S."/>
            <person name="Magee B.B."/>
            <person name="Whiteway M."/>
            <person name="Chibana H."/>
            <person name="Nantel A."/>
            <person name="Magee P.T."/>
        </authorList>
    </citation>
    <scope>GENOME REANNOTATION</scope>
    <source>
        <strain>SC5314 / ATCC MYA-2876</strain>
    </source>
</reference>
<reference key="3">
    <citation type="journal article" date="2013" name="Genome Biol.">
        <title>Assembly of a phased diploid Candida albicans genome facilitates allele-specific measurements and provides a simple model for repeat and indel structure.</title>
        <authorList>
            <person name="Muzzey D."/>
            <person name="Schwartz K."/>
            <person name="Weissman J.S."/>
            <person name="Sherlock G."/>
        </authorList>
    </citation>
    <scope>NUCLEOTIDE SEQUENCE [LARGE SCALE GENOMIC DNA]</scope>
    <scope>GENOME REANNOTATION</scope>
    <source>
        <strain>SC5314 / ATCC MYA-2876</strain>
    </source>
</reference>
<reference key="4">
    <citation type="journal article" date="2004" name="Proteomics">
        <title>Proteomics-based identification of novel Candida albicans antigens for diagnosis of systemic candidiasis in patients with underlying hematological malignancies.</title>
        <authorList>
            <person name="Pitarch A."/>
            <person name="Abian J."/>
            <person name="Carrascal M."/>
            <person name="Sanchez M."/>
            <person name="Nombela C."/>
            <person name="Gil C."/>
        </authorList>
    </citation>
    <scope>PROTEIN SEQUENCE OF 128-139 AND 299-305</scope>
    <scope>SUBCELLULAR LOCATION</scope>
    <scope>ANTIGENICITY</scope>
    <source>
        <strain>SC5314 / ATCC MYA-2876</strain>
        <tissue>Protoplast</tissue>
    </source>
</reference>
<keyword id="KW-0963">Cytoplasm</keyword>
<keyword id="KW-0903">Direct protein sequencing</keyword>
<keyword id="KW-0521">NADP</keyword>
<keyword id="KW-0560">Oxidoreductase</keyword>
<keyword id="KW-1185">Reference proteome</keyword>
<sequence length="341" mass="37634">MSSSTTVFVSGASGFIAQTLVKQLIEKGYKVVGTVRSNEKGDSLKENLKAAKLQSENFTYEIVKDIAVKGAFDDALKKHPEVTVFLHTASPFHFNVTDIEKELLTPAVEGTNNALQAIKTHGPQIKRVVVTSSYAAVGRFADLADPSIPATEESWNPITWEQSLSNPLAGYVGSKKFAEKAAWDFVEKEKPNFTLSVINPVYVFGPQAFEIKNKSQLNTSSEIINGLLNSKPDSKFDNLTGYFIDVRDVAKAHIVAFEKDSIQGQRLILAESPFSTQSILDLIRKDFPQLDSQLPKGDPSQADAWKKAESKIENEKTRELLGFKFIDFKKSIDDSVAQIIG</sequence>
<gene>
    <name type="primary">GRP2</name>
    <name type="synonym">GRE22</name>
    <name type="ordered locus">CAALFM_C502860CA</name>
    <name type="ORF">CaO19.11785</name>
    <name type="ORF">CaO19.4309</name>
</gene>
<comment type="function">
    <text evidence="2">Catalyzes the irreversible reduction of the cytotoxic compound methylglyoxal (MG, 2-oxopropanal) to (S)-lactaldehyde. MG is synthesized via a bypath of glycolysis from dihydroxyacetone phosphate and is believed to play a role in cell cycle regulation and stress adaptation.</text>
</comment>
<comment type="catalytic activity">
    <reaction evidence="2">
        <text>(S)-lactaldehyde + NADP(+) = methylglyoxal + NADPH + H(+)</text>
        <dbReference type="Rhea" id="RHEA:21748"/>
        <dbReference type="ChEBI" id="CHEBI:15378"/>
        <dbReference type="ChEBI" id="CHEBI:17158"/>
        <dbReference type="ChEBI" id="CHEBI:18041"/>
        <dbReference type="ChEBI" id="CHEBI:57783"/>
        <dbReference type="ChEBI" id="CHEBI:58349"/>
        <dbReference type="EC" id="1.1.1.283"/>
    </reaction>
</comment>
<comment type="subcellular location">
    <subcellularLocation>
        <location evidence="3">Cytoplasm</location>
    </subcellularLocation>
</comment>
<comment type="miscellaneous">
    <text>Has antigenic properties. Elicits a specific immune response in systemic candidiasis human patients undergoing malignant hematological disorders.</text>
</comment>
<comment type="similarity">
    <text evidence="4">Belongs to the NAD(P)-dependent epimerase/dehydratase family. Dihydroflavonol-4-reductase subfamily.</text>
</comment>
<proteinExistence type="evidence at protein level"/>
<protein>
    <recommendedName>
        <fullName>Putative NADPH-dependent methylglyoxal reductase GRP2</fullName>
        <ecNumber evidence="2">1.1.1.283</ecNumber>
    </recommendedName>
    <alternativeName>
        <fullName>Cytoplasmic antigenic protein 2</fullName>
    </alternativeName>
</protein>
<accession>P83775</accession>
<accession>A0A1D8PNJ6</accession>
<accession>Q5AG70</accession>
<feature type="chain" id="PRO_0000089302" description="Putative NADPH-dependent methylglyoxal reductase GRP2">
    <location>
        <begin position="1"/>
        <end position="341"/>
    </location>
</feature>
<feature type="binding site" evidence="1">
    <location>
        <position position="40"/>
    </location>
    <ligand>
        <name>NADP(+)</name>
        <dbReference type="ChEBI" id="CHEBI:58349"/>
    </ligand>
</feature>
<feature type="binding site" evidence="1">
    <location>
        <position position="171"/>
    </location>
    <ligand>
        <name>NADP(+)</name>
        <dbReference type="ChEBI" id="CHEBI:58349"/>
    </ligand>
</feature>
<evidence type="ECO:0000250" key="1">
    <source>
        <dbReference type="UniProtKB" id="A0A059TC02"/>
    </source>
</evidence>
<evidence type="ECO:0000250" key="2">
    <source>
        <dbReference type="UniProtKB" id="Q12068"/>
    </source>
</evidence>
<evidence type="ECO:0000269" key="3">
    <source>
    </source>
</evidence>
<evidence type="ECO:0000305" key="4"/>
<name>GRP2_CANAL</name>